<comment type="function">
    <text evidence="1">Required for maturation of 30S ribosomal subunits.</text>
</comment>
<comment type="subcellular location">
    <subcellularLocation>
        <location evidence="1">Cytoplasm</location>
    </subcellularLocation>
</comment>
<comment type="similarity">
    <text evidence="1">Belongs to the RimP family.</text>
</comment>
<organism>
    <name type="scientific">Cupriavidus pinatubonensis (strain JMP 134 / LMG 1197)</name>
    <name type="common">Cupriavidus necator (strain JMP 134)</name>
    <dbReference type="NCBI Taxonomy" id="264198"/>
    <lineage>
        <taxon>Bacteria</taxon>
        <taxon>Pseudomonadati</taxon>
        <taxon>Pseudomonadota</taxon>
        <taxon>Betaproteobacteria</taxon>
        <taxon>Burkholderiales</taxon>
        <taxon>Burkholderiaceae</taxon>
        <taxon>Cupriavidus</taxon>
    </lineage>
</organism>
<protein>
    <recommendedName>
        <fullName evidence="1">Ribosome maturation factor RimP</fullName>
    </recommendedName>
</protein>
<proteinExistence type="inferred from homology"/>
<evidence type="ECO:0000255" key="1">
    <source>
        <dbReference type="HAMAP-Rule" id="MF_01077"/>
    </source>
</evidence>
<sequence length="162" mass="17918">MHLADLIETTLNGMGYELVELERAPAGLLRVYIDQPETGIVIEDCEKVSRQLTHVLTVENVDYERLEVSSPGLDRPLKKLADYVRFAGAEARVTLRLPVNGQKNFTGILREPTGEAGAEKVGLEFEGKDGPALLEFTVSDVDKARLVPVIDFKGNQRKGNKQ</sequence>
<name>RIMP_CUPPJ</name>
<gene>
    <name evidence="1" type="primary">rimP</name>
    <name type="ordered locus">Reut_A2030</name>
</gene>
<feature type="chain" id="PRO_0000229269" description="Ribosome maturation factor RimP">
    <location>
        <begin position="1"/>
        <end position="162"/>
    </location>
</feature>
<accession>Q46ZN9</accession>
<keyword id="KW-0963">Cytoplasm</keyword>
<keyword id="KW-0690">Ribosome biogenesis</keyword>
<reference key="1">
    <citation type="journal article" date="2010" name="PLoS ONE">
        <title>The complete multipartite genome sequence of Cupriavidus necator JMP134, a versatile pollutant degrader.</title>
        <authorList>
            <person name="Lykidis A."/>
            <person name="Perez-Pantoja D."/>
            <person name="Ledger T."/>
            <person name="Mavromatis K."/>
            <person name="Anderson I.J."/>
            <person name="Ivanova N.N."/>
            <person name="Hooper S.D."/>
            <person name="Lapidus A."/>
            <person name="Lucas S."/>
            <person name="Gonzalez B."/>
            <person name="Kyrpides N.C."/>
        </authorList>
    </citation>
    <scope>NUCLEOTIDE SEQUENCE [LARGE SCALE GENOMIC DNA]</scope>
    <source>
        <strain>JMP134 / LMG 1197</strain>
    </source>
</reference>
<dbReference type="EMBL" id="CP000090">
    <property type="protein sequence ID" value="AAZ61394.1"/>
    <property type="molecule type" value="Genomic_DNA"/>
</dbReference>
<dbReference type="SMR" id="Q46ZN9"/>
<dbReference type="STRING" id="264198.Reut_A2030"/>
<dbReference type="KEGG" id="reu:Reut_A2030"/>
<dbReference type="eggNOG" id="COG0779">
    <property type="taxonomic scope" value="Bacteria"/>
</dbReference>
<dbReference type="HOGENOM" id="CLU_070525_1_0_4"/>
<dbReference type="OrthoDB" id="9805006at2"/>
<dbReference type="GO" id="GO:0005829">
    <property type="term" value="C:cytosol"/>
    <property type="evidence" value="ECO:0007669"/>
    <property type="project" value="TreeGrafter"/>
</dbReference>
<dbReference type="GO" id="GO:0000028">
    <property type="term" value="P:ribosomal small subunit assembly"/>
    <property type="evidence" value="ECO:0007669"/>
    <property type="project" value="TreeGrafter"/>
</dbReference>
<dbReference type="GO" id="GO:0006412">
    <property type="term" value="P:translation"/>
    <property type="evidence" value="ECO:0007669"/>
    <property type="project" value="TreeGrafter"/>
</dbReference>
<dbReference type="CDD" id="cd01734">
    <property type="entry name" value="YlxS_C"/>
    <property type="match status" value="1"/>
</dbReference>
<dbReference type="Gene3D" id="2.30.30.180">
    <property type="entry name" value="Ribosome maturation factor RimP, C-terminal domain"/>
    <property type="match status" value="1"/>
</dbReference>
<dbReference type="Gene3D" id="3.30.300.70">
    <property type="entry name" value="RimP-like superfamily, N-terminal"/>
    <property type="match status" value="1"/>
</dbReference>
<dbReference type="HAMAP" id="MF_01077">
    <property type="entry name" value="RimP"/>
    <property type="match status" value="1"/>
</dbReference>
<dbReference type="InterPro" id="IPR003728">
    <property type="entry name" value="Ribosome_maturation_RimP"/>
</dbReference>
<dbReference type="InterPro" id="IPR028998">
    <property type="entry name" value="RimP_C"/>
</dbReference>
<dbReference type="InterPro" id="IPR036847">
    <property type="entry name" value="RimP_C_sf"/>
</dbReference>
<dbReference type="InterPro" id="IPR028989">
    <property type="entry name" value="RimP_N"/>
</dbReference>
<dbReference type="InterPro" id="IPR035956">
    <property type="entry name" value="RimP_N_sf"/>
</dbReference>
<dbReference type="NCBIfam" id="NF000929">
    <property type="entry name" value="PRK00092.2-1"/>
    <property type="match status" value="1"/>
</dbReference>
<dbReference type="PANTHER" id="PTHR33867">
    <property type="entry name" value="RIBOSOME MATURATION FACTOR RIMP"/>
    <property type="match status" value="1"/>
</dbReference>
<dbReference type="PANTHER" id="PTHR33867:SF1">
    <property type="entry name" value="RIBOSOME MATURATION FACTOR RIMP"/>
    <property type="match status" value="1"/>
</dbReference>
<dbReference type="Pfam" id="PF17384">
    <property type="entry name" value="DUF150_C"/>
    <property type="match status" value="1"/>
</dbReference>
<dbReference type="Pfam" id="PF02576">
    <property type="entry name" value="RimP_N"/>
    <property type="match status" value="1"/>
</dbReference>
<dbReference type="SUPFAM" id="SSF74942">
    <property type="entry name" value="YhbC-like, C-terminal domain"/>
    <property type="match status" value="1"/>
</dbReference>
<dbReference type="SUPFAM" id="SSF75420">
    <property type="entry name" value="YhbC-like, N-terminal domain"/>
    <property type="match status" value="1"/>
</dbReference>